<dbReference type="EMBL" id="AJ006470">
    <property type="protein sequence ID" value="CAA07054.1"/>
    <property type="molecule type" value="mRNA"/>
</dbReference>
<dbReference type="EMBL" id="AK314719">
    <property type="protein sequence ID" value="BAG37263.1"/>
    <property type="molecule type" value="mRNA"/>
</dbReference>
<dbReference type="EMBL" id="BC008745">
    <property type="protein sequence ID" value="AAH08745.1"/>
    <property type="molecule type" value="mRNA"/>
</dbReference>
<dbReference type="CCDS" id="CCDS2657.1"/>
<dbReference type="RefSeq" id="NP_006362.1">
    <property type="nucleotide sequence ID" value="NM_006371.5"/>
</dbReference>
<dbReference type="PDB" id="8K0E">
    <property type="method" value="EM"/>
    <property type="resolution" value="3.65 A"/>
    <property type="chains" value="B=1-401"/>
</dbReference>
<dbReference type="PDB" id="8K0F">
    <property type="method" value="EM"/>
    <property type="resolution" value="3.37 A"/>
    <property type="chains" value="B=1-401"/>
</dbReference>
<dbReference type="PDB" id="8K0I">
    <property type="method" value="EM"/>
    <property type="resolution" value="3.62 A"/>
    <property type="chains" value="B/b=1-401"/>
</dbReference>
<dbReference type="PDB" id="8K0M">
    <property type="method" value="EM"/>
    <property type="resolution" value="3.17 A"/>
    <property type="chains" value="B=1-401"/>
</dbReference>
<dbReference type="PDB" id="8K17">
    <property type="method" value="EM"/>
    <property type="resolution" value="3.18 A"/>
    <property type="chains" value="B=1-401"/>
</dbReference>
<dbReference type="PDB" id="8KC9">
    <property type="method" value="EM"/>
    <property type="resolution" value="3.75 A"/>
    <property type="chains" value="B=1-401"/>
</dbReference>
<dbReference type="PDBsum" id="8K0E"/>
<dbReference type="PDBsum" id="8K0F"/>
<dbReference type="PDBsum" id="8K0I"/>
<dbReference type="PDBsum" id="8K0M"/>
<dbReference type="PDBsum" id="8K17"/>
<dbReference type="PDBsum" id="8KC9"/>
<dbReference type="EMDB" id="EMD-36762"/>
<dbReference type="EMDB" id="EMD-36763"/>
<dbReference type="EMDB" id="EMD-36765"/>
<dbReference type="EMDB" id="EMD-36774"/>
<dbReference type="EMDB" id="EMD-36787"/>
<dbReference type="EMDB" id="EMD-37097"/>
<dbReference type="SMR" id="O75718"/>
<dbReference type="BioGRID" id="115754">
    <property type="interactions" value="123"/>
</dbReference>
<dbReference type="FunCoup" id="O75718">
    <property type="interactions" value="716"/>
</dbReference>
<dbReference type="IntAct" id="O75718">
    <property type="interactions" value="59"/>
</dbReference>
<dbReference type="MINT" id="O75718"/>
<dbReference type="STRING" id="9606.ENSP00000323696"/>
<dbReference type="GlyConnect" id="1074">
    <property type="glycosylation" value="8 N-Linked glycans (2 sites)"/>
</dbReference>
<dbReference type="GlyCosmos" id="O75718">
    <property type="glycosylation" value="3 sites, 9 glycans"/>
</dbReference>
<dbReference type="GlyGen" id="O75718">
    <property type="glycosylation" value="5 sites, 21 N-linked glycans (2 sites), 1 O-linked glycan (3 sites)"/>
</dbReference>
<dbReference type="iPTMnet" id="O75718"/>
<dbReference type="MetOSite" id="O75718"/>
<dbReference type="PhosphoSitePlus" id="O75718"/>
<dbReference type="SwissPalm" id="O75718"/>
<dbReference type="BioMuta" id="CRTAP"/>
<dbReference type="jPOST" id="O75718"/>
<dbReference type="MassIVE" id="O75718"/>
<dbReference type="PaxDb" id="9606-ENSP00000323696"/>
<dbReference type="PeptideAtlas" id="O75718"/>
<dbReference type="ProteomicsDB" id="50176"/>
<dbReference type="Pumba" id="O75718"/>
<dbReference type="Antibodypedia" id="27879">
    <property type="antibodies" value="259 antibodies from 29 providers"/>
</dbReference>
<dbReference type="DNASU" id="10491"/>
<dbReference type="Ensembl" id="ENST00000320954.11">
    <property type="protein sequence ID" value="ENSP00000323696.5"/>
    <property type="gene ID" value="ENSG00000170275.15"/>
</dbReference>
<dbReference type="GeneID" id="10491"/>
<dbReference type="KEGG" id="hsa:10491"/>
<dbReference type="MANE-Select" id="ENST00000320954.11">
    <property type="protein sequence ID" value="ENSP00000323696.5"/>
    <property type="RefSeq nucleotide sequence ID" value="NM_006371.5"/>
    <property type="RefSeq protein sequence ID" value="NP_006362.1"/>
</dbReference>
<dbReference type="UCSC" id="uc003cfl.5">
    <property type="organism name" value="human"/>
</dbReference>
<dbReference type="AGR" id="HGNC:2379"/>
<dbReference type="CTD" id="10491"/>
<dbReference type="DisGeNET" id="10491"/>
<dbReference type="GeneCards" id="CRTAP"/>
<dbReference type="HGNC" id="HGNC:2379">
    <property type="gene designation" value="CRTAP"/>
</dbReference>
<dbReference type="HPA" id="ENSG00000170275">
    <property type="expression patterns" value="Low tissue specificity"/>
</dbReference>
<dbReference type="MalaCards" id="CRTAP"/>
<dbReference type="MIM" id="605497">
    <property type="type" value="gene"/>
</dbReference>
<dbReference type="MIM" id="610682">
    <property type="type" value="phenotype"/>
</dbReference>
<dbReference type="neXtProt" id="NX_O75718"/>
<dbReference type="OpenTargets" id="ENSG00000170275"/>
<dbReference type="Orphanet" id="2050">
    <property type="disease" value="Cole-Carpenter syndrome"/>
</dbReference>
<dbReference type="Orphanet" id="216804">
    <property type="disease" value="Osteogenesis imperfecta type 2"/>
</dbReference>
<dbReference type="Orphanet" id="216812">
    <property type="disease" value="Osteogenesis imperfecta type 3"/>
</dbReference>
<dbReference type="Orphanet" id="216820">
    <property type="disease" value="Osteogenesis imperfecta type 4"/>
</dbReference>
<dbReference type="PharmGKB" id="PA26900"/>
<dbReference type="VEuPathDB" id="HostDB:ENSG00000170275"/>
<dbReference type="eggNOG" id="KOG4459">
    <property type="taxonomic scope" value="Eukaryota"/>
</dbReference>
<dbReference type="GeneTree" id="ENSGT00940000153814"/>
<dbReference type="HOGENOM" id="CLU_029887_0_1_1"/>
<dbReference type="InParanoid" id="O75718"/>
<dbReference type="OMA" id="WPETVEY"/>
<dbReference type="OrthoDB" id="8610171at2759"/>
<dbReference type="PAN-GO" id="O75718">
    <property type="GO annotations" value="4 GO annotations based on evolutionary models"/>
</dbReference>
<dbReference type="PhylomeDB" id="O75718"/>
<dbReference type="TreeFam" id="TF320837"/>
<dbReference type="PathwayCommons" id="O75718"/>
<dbReference type="Reactome" id="R-HSA-1650814">
    <property type="pathway name" value="Collagen biosynthesis and modifying enzymes"/>
</dbReference>
<dbReference type="SignaLink" id="O75718"/>
<dbReference type="BioGRID-ORCS" id="10491">
    <property type="hits" value="12 hits in 1162 CRISPR screens"/>
</dbReference>
<dbReference type="ChiTaRS" id="CRTAP">
    <property type="organism name" value="human"/>
</dbReference>
<dbReference type="GeneWiki" id="Cartilage_associated_protein"/>
<dbReference type="GenomeRNAi" id="10491"/>
<dbReference type="Pharos" id="O75718">
    <property type="development level" value="Tbio"/>
</dbReference>
<dbReference type="PRO" id="PR:O75718"/>
<dbReference type="Proteomes" id="UP000005640">
    <property type="component" value="Chromosome 3"/>
</dbReference>
<dbReference type="RNAct" id="O75718">
    <property type="molecule type" value="protein"/>
</dbReference>
<dbReference type="Bgee" id="ENSG00000170275">
    <property type="expression patterns" value="Expressed in tendon of biceps brachii and 207 other cell types or tissues"/>
</dbReference>
<dbReference type="ExpressionAtlas" id="O75718">
    <property type="expression patterns" value="baseline and differential"/>
</dbReference>
<dbReference type="GO" id="GO:0005783">
    <property type="term" value="C:endoplasmic reticulum"/>
    <property type="evidence" value="ECO:0000314"/>
    <property type="project" value="UniProtKB"/>
</dbReference>
<dbReference type="GO" id="GO:0005788">
    <property type="term" value="C:endoplasmic reticulum lumen"/>
    <property type="evidence" value="ECO:0000304"/>
    <property type="project" value="Reactome"/>
</dbReference>
<dbReference type="GO" id="GO:0005615">
    <property type="term" value="C:extracellular space"/>
    <property type="evidence" value="ECO:0000314"/>
    <property type="project" value="UniProtKB"/>
</dbReference>
<dbReference type="GO" id="GO:0032991">
    <property type="term" value="C:protein-containing complex"/>
    <property type="evidence" value="ECO:0000250"/>
    <property type="project" value="UniProtKB"/>
</dbReference>
<dbReference type="GO" id="GO:0061077">
    <property type="term" value="P:chaperone-mediated protein folding"/>
    <property type="evidence" value="ECO:0000250"/>
    <property type="project" value="UniProtKB"/>
</dbReference>
<dbReference type="GO" id="GO:0030199">
    <property type="term" value="P:collagen fibril organization"/>
    <property type="evidence" value="ECO:0000318"/>
    <property type="project" value="GO_Central"/>
</dbReference>
<dbReference type="GO" id="GO:1901874">
    <property type="term" value="P:negative regulation of post-translational protein modification"/>
    <property type="evidence" value="ECO:0000315"/>
    <property type="project" value="UniProtKB"/>
</dbReference>
<dbReference type="GO" id="GO:0050821">
    <property type="term" value="P:protein stabilization"/>
    <property type="evidence" value="ECO:0000315"/>
    <property type="project" value="UniProtKB"/>
</dbReference>
<dbReference type="GO" id="GO:0007283">
    <property type="term" value="P:spermatogenesis"/>
    <property type="evidence" value="ECO:0007669"/>
    <property type="project" value="Ensembl"/>
</dbReference>
<dbReference type="FunFam" id="1.25.40.10:FF:000166">
    <property type="entry name" value="Cartilage associated protein"/>
    <property type="match status" value="1"/>
</dbReference>
<dbReference type="FunFam" id="1.25.40.10:FF:001015">
    <property type="entry name" value="Cartilage associated protein"/>
    <property type="match status" value="1"/>
</dbReference>
<dbReference type="Gene3D" id="1.25.40.10">
    <property type="entry name" value="Tetratricopeptide repeat domain"/>
    <property type="match status" value="2"/>
</dbReference>
<dbReference type="InterPro" id="IPR052284">
    <property type="entry name" value="Collagen_mod_leprecan"/>
</dbReference>
<dbReference type="InterPro" id="IPR056585">
    <property type="entry name" value="Leprecan_dom"/>
</dbReference>
<dbReference type="InterPro" id="IPR011990">
    <property type="entry name" value="TPR-like_helical_dom_sf"/>
</dbReference>
<dbReference type="PANTHER" id="PTHR13986:SF3">
    <property type="entry name" value="CARTILAGE-ASSOCIATED PROTEIN"/>
    <property type="match status" value="1"/>
</dbReference>
<dbReference type="PANTHER" id="PTHR13986">
    <property type="entry name" value="PROTEIN LYSINE HYDROXYLATION COMPLEX COMPONENT"/>
    <property type="match status" value="1"/>
</dbReference>
<dbReference type="Pfam" id="PF23557">
    <property type="entry name" value="TPR_leprecan"/>
    <property type="match status" value="1"/>
</dbReference>
<sequence>MEPGRRGAAALLALLCVACALRAGRAQYERYSFRSFPRDELMPLESAYRHALDKYSGEHWAESVGYLEISLRLHRLLRDSEAFCHRNCSAAPQPEPAAGLASYPELRLFGGLLRRAHCLKRCKQGLPAFRQSQPSREVLADFQRREPYKFLQFAYFKANNLPKAIAAAHTFLLKHPDDEMMKRNMAYYKSLPGAEDYIKDLETKSYESLFIRAVRAYNGENWRTSITDMELALPDFFKAFYECLAACEGSREIKDFKDFYLSIADHYVEVLECKIQCEENLTPVIGGYPVEKFVATMYHYLQFAYYKLNDLKNAAPCAVSYLLFDQNDKVMQQNLVYYQYHRDTWGLSDEHFQPRPEAVQFFNVTTLQKELYDFAKENIMDDDEGEVVEYVDDLLELEETS</sequence>
<keyword id="KW-0002">3D-structure</keyword>
<keyword id="KW-0225">Disease variant</keyword>
<keyword id="KW-0242">Dwarfism</keyword>
<keyword id="KW-0272">Extracellular matrix</keyword>
<keyword id="KW-0325">Glycoprotein</keyword>
<keyword id="KW-0379">Hydroxylation</keyword>
<keyword id="KW-1065">Osteogenesis imperfecta</keyword>
<keyword id="KW-1267">Proteomics identification</keyword>
<keyword id="KW-1185">Reference proteome</keyword>
<keyword id="KW-0964">Secreted</keyword>
<keyword id="KW-0732">Signal</keyword>
<gene>
    <name type="primary">CRTAP</name>
    <name type="synonym">CASP</name>
</gene>
<comment type="function">
    <text evidence="4">Necessary for efficient 3-hydroxylation of fibrillar collagen prolyl residues.</text>
</comment>
<comment type="interaction">
    <interactant intactId="EBI-2515576">
        <id>O75718</id>
    </interactant>
    <interactant intactId="EBI-396328">
        <id>Q32P28</id>
        <label>P3H1</label>
    </interactant>
    <organismsDiffer>false</organismsDiffer>
    <experiments>3</experiments>
</comment>
<comment type="subcellular location">
    <subcellularLocation>
        <location evidence="1">Secreted</location>
        <location evidence="1">Extracellular space</location>
        <location evidence="1">Extracellular matrix</location>
    </subcellularLocation>
</comment>
<comment type="tissue specificity">
    <text>Found in articular chondrocytes. Expressed in a variety of tissues.</text>
</comment>
<comment type="disease" evidence="4 5 6 7">
    <disease id="DI-02104">
        <name>Osteogenesis imperfecta 7</name>
        <acronym>OI7</acronym>
        <description>A form of osteogenesis imperfecta, a disorder of bone formation characterized by low bone mass, bone fragility and susceptibility to fractures after minimal trauma. Disease severity ranges from very mild forms without fractures to intrauterine fractures and perinatal lethality. Extraskeletal manifestations, which affect a variable number of patients, are dentinogenesis imperfecta, hearing loss, and blue sclerae. OI7 is an autosomal recessive, severe form. Multiple fractures are present at birth and patients have short stature, short humeri and femora, coxa vara, and white sclera. Dentinogenesis imperfecta is absent. Death can occur in the perinatal period due to secondary respiratory insufficiency.</description>
        <dbReference type="MIM" id="610682"/>
    </disease>
    <text>The disease is caused by variants affecting the gene represented in this entry.</text>
</comment>
<comment type="similarity">
    <text evidence="8">Belongs to the leprecan family.</text>
</comment>
<comment type="online information" name="Osteogenesis imperfecta variant database">
    <link uri="https://www.LOVD.nl/CRTAP"/>
    <text>The CRTAP gene homepage</text>
</comment>
<accession>O75718</accession>
<accession>B2RBL6</accession>
<protein>
    <recommendedName>
        <fullName>Cartilage-associated protein</fullName>
    </recommendedName>
</protein>
<organism>
    <name type="scientific">Homo sapiens</name>
    <name type="common">Human</name>
    <dbReference type="NCBI Taxonomy" id="9606"/>
    <lineage>
        <taxon>Eukaryota</taxon>
        <taxon>Metazoa</taxon>
        <taxon>Chordata</taxon>
        <taxon>Craniata</taxon>
        <taxon>Vertebrata</taxon>
        <taxon>Euteleostomi</taxon>
        <taxon>Mammalia</taxon>
        <taxon>Eutheria</taxon>
        <taxon>Euarchontoglires</taxon>
        <taxon>Primates</taxon>
        <taxon>Haplorrhini</taxon>
        <taxon>Catarrhini</taxon>
        <taxon>Hominidae</taxon>
        <taxon>Homo</taxon>
    </lineage>
</organism>
<name>CRTAP_HUMAN</name>
<evidence type="ECO:0000250" key="1"/>
<evidence type="ECO:0000255" key="2"/>
<evidence type="ECO:0000269" key="3">
    <source>
    </source>
</evidence>
<evidence type="ECO:0000269" key="4">
    <source>
    </source>
</evidence>
<evidence type="ECO:0000269" key="5">
    <source>
    </source>
</evidence>
<evidence type="ECO:0000269" key="6">
    <source>
    </source>
</evidence>
<evidence type="ECO:0000269" key="7">
    <source>
    </source>
</evidence>
<evidence type="ECO:0000305" key="8"/>
<evidence type="ECO:0007829" key="9">
    <source>
        <dbReference type="PDB" id="8K0F"/>
    </source>
</evidence>
<evidence type="ECO:0007829" key="10">
    <source>
        <dbReference type="PDB" id="8K0M"/>
    </source>
</evidence>
<evidence type="ECO:0007829" key="11">
    <source>
        <dbReference type="PDB" id="8K17"/>
    </source>
</evidence>
<proteinExistence type="evidence at protein level"/>
<feature type="signal peptide" evidence="2">
    <location>
        <begin position="1"/>
        <end position="26"/>
    </location>
</feature>
<feature type="chain" id="PRO_0000006319" description="Cartilage-associated protein">
    <location>
        <begin position="27"/>
        <end position="401"/>
    </location>
</feature>
<feature type="glycosylation site" description="N-linked (GlcNAc...) asparagine" evidence="2">
    <location>
        <position position="87"/>
    </location>
</feature>
<feature type="glycosylation site" description="N-linked (GlcNAc...) asparagine" evidence="2">
    <location>
        <position position="363"/>
    </location>
</feature>
<feature type="sequence variant" id="VAR_063599" description="In OI7; severe form; dbSNP:rs137853938." evidence="6">
    <original>A</original>
    <variation>E</variation>
    <location>
        <position position="13"/>
    </location>
</feature>
<feature type="sequence variant" id="VAR_054442" description="In OI7; dbSNP:rs72659358." evidence="5">
    <original>L</original>
    <variation>P</variation>
    <location>
        <position position="67"/>
    </location>
</feature>
<feature type="sequence variant" id="VAR_032846" description="In dbSNP:rs17850371." evidence="3">
    <original>E</original>
    <variation>D</variation>
    <location>
        <position position="137"/>
    </location>
</feature>
<feature type="sequence variant" id="VAR_063600" description="In OI7; severe form; dbSNP:rs137853942." evidence="6">
    <original>K</original>
    <variation>E</variation>
    <location>
        <position position="157"/>
    </location>
</feature>
<feature type="sequence variant" id="VAR_053050" description="In dbSNP:rs1135127.">
    <original>L</original>
    <variation>V</variation>
    <location>
        <position position="261"/>
    </location>
</feature>
<feature type="strand" evidence="10">
    <location>
        <begin position="33"/>
        <end position="35"/>
    </location>
</feature>
<feature type="helix" evidence="10">
    <location>
        <begin position="38"/>
        <end position="40"/>
    </location>
</feature>
<feature type="helix" evidence="10">
    <location>
        <begin position="44"/>
        <end position="56"/>
    </location>
</feature>
<feature type="helix" evidence="10">
    <location>
        <begin position="61"/>
        <end position="81"/>
    </location>
</feature>
<feature type="helix" evidence="10">
    <location>
        <begin position="84"/>
        <end position="87"/>
    </location>
</feature>
<feature type="strand" evidence="11">
    <location>
        <begin position="89"/>
        <end position="91"/>
    </location>
</feature>
<feature type="helix" evidence="10">
    <location>
        <begin position="99"/>
        <end position="102"/>
    </location>
</feature>
<feature type="helix" evidence="10">
    <location>
        <begin position="104"/>
        <end position="122"/>
    </location>
</feature>
<feature type="helix" evidence="10">
    <location>
        <begin position="127"/>
        <end position="129"/>
    </location>
</feature>
<feature type="helix" evidence="10">
    <location>
        <begin position="136"/>
        <end position="143"/>
    </location>
</feature>
<feature type="turn" evidence="9">
    <location>
        <begin position="144"/>
        <end position="146"/>
    </location>
</feature>
<feature type="helix" evidence="10">
    <location>
        <begin position="147"/>
        <end position="156"/>
    </location>
</feature>
<feature type="turn" evidence="10">
    <location>
        <begin position="157"/>
        <end position="159"/>
    </location>
</feature>
<feature type="helix" evidence="10">
    <location>
        <begin position="161"/>
        <end position="174"/>
    </location>
</feature>
<feature type="helix" evidence="10">
    <location>
        <begin position="179"/>
        <end position="190"/>
    </location>
</feature>
<feature type="strand" evidence="10">
    <location>
        <begin position="191"/>
        <end position="193"/>
    </location>
</feature>
<feature type="helix" evidence="10">
    <location>
        <begin position="205"/>
        <end position="218"/>
    </location>
</feature>
<feature type="helix" evidence="10">
    <location>
        <begin position="223"/>
        <end position="245"/>
    </location>
</feature>
<feature type="helix" evidence="10">
    <location>
        <begin position="259"/>
        <end position="274"/>
    </location>
</feature>
<feature type="helix" evidence="10">
    <location>
        <begin position="277"/>
        <end position="280"/>
    </location>
</feature>
<feature type="helix" evidence="10">
    <location>
        <begin position="293"/>
        <end position="307"/>
    </location>
</feature>
<feature type="helix" evidence="10">
    <location>
        <begin position="311"/>
        <end position="324"/>
    </location>
</feature>
<feature type="helix" evidence="10">
    <location>
        <begin position="330"/>
        <end position="340"/>
    </location>
</feature>
<feature type="helix" evidence="10">
    <location>
        <begin position="342"/>
        <end position="345"/>
    </location>
</feature>
<feature type="helix" evidence="11">
    <location>
        <begin position="349"/>
        <end position="352"/>
    </location>
</feature>
<feature type="helix" evidence="10">
    <location>
        <begin position="356"/>
        <end position="378"/>
    </location>
</feature>
<feature type="strand" evidence="11">
    <location>
        <begin position="384"/>
        <end position="386"/>
    </location>
</feature>
<reference key="1">
    <citation type="journal article" date="1999" name="Cytogenet. Cell Genet.">
        <title>cDNA cloning, characterization and chromosome mapping of the gene encoding human cartilage associated protein (CRTAP).</title>
        <authorList>
            <person name="Tonachini L."/>
            <person name="Morello R."/>
            <person name="Monticone M."/>
            <person name="Skaug J."/>
            <person name="Scherer S.W."/>
            <person name="Cancedda R."/>
            <person name="Castagnola P."/>
        </authorList>
    </citation>
    <scope>NUCLEOTIDE SEQUENCE [MRNA]</scope>
    <source>
        <tissue>Fetal brain</tissue>
    </source>
</reference>
<reference key="2">
    <citation type="journal article" date="2004" name="Nat. Genet.">
        <title>Complete sequencing and characterization of 21,243 full-length human cDNAs.</title>
        <authorList>
            <person name="Ota T."/>
            <person name="Suzuki Y."/>
            <person name="Nishikawa T."/>
            <person name="Otsuki T."/>
            <person name="Sugiyama T."/>
            <person name="Irie R."/>
            <person name="Wakamatsu A."/>
            <person name="Hayashi K."/>
            <person name="Sato H."/>
            <person name="Nagai K."/>
            <person name="Kimura K."/>
            <person name="Makita H."/>
            <person name="Sekine M."/>
            <person name="Obayashi M."/>
            <person name="Nishi T."/>
            <person name="Shibahara T."/>
            <person name="Tanaka T."/>
            <person name="Ishii S."/>
            <person name="Yamamoto J."/>
            <person name="Saito K."/>
            <person name="Kawai Y."/>
            <person name="Isono Y."/>
            <person name="Nakamura Y."/>
            <person name="Nagahari K."/>
            <person name="Murakami K."/>
            <person name="Yasuda T."/>
            <person name="Iwayanagi T."/>
            <person name="Wagatsuma M."/>
            <person name="Shiratori A."/>
            <person name="Sudo H."/>
            <person name="Hosoiri T."/>
            <person name="Kaku Y."/>
            <person name="Kodaira H."/>
            <person name="Kondo H."/>
            <person name="Sugawara M."/>
            <person name="Takahashi M."/>
            <person name="Kanda K."/>
            <person name="Yokoi T."/>
            <person name="Furuya T."/>
            <person name="Kikkawa E."/>
            <person name="Omura Y."/>
            <person name="Abe K."/>
            <person name="Kamihara K."/>
            <person name="Katsuta N."/>
            <person name="Sato K."/>
            <person name="Tanikawa M."/>
            <person name="Yamazaki M."/>
            <person name="Ninomiya K."/>
            <person name="Ishibashi T."/>
            <person name="Yamashita H."/>
            <person name="Murakawa K."/>
            <person name="Fujimori K."/>
            <person name="Tanai H."/>
            <person name="Kimata M."/>
            <person name="Watanabe M."/>
            <person name="Hiraoka S."/>
            <person name="Chiba Y."/>
            <person name="Ishida S."/>
            <person name="Ono Y."/>
            <person name="Takiguchi S."/>
            <person name="Watanabe S."/>
            <person name="Yosida M."/>
            <person name="Hotuta T."/>
            <person name="Kusano J."/>
            <person name="Kanehori K."/>
            <person name="Takahashi-Fujii A."/>
            <person name="Hara H."/>
            <person name="Tanase T.-O."/>
            <person name="Nomura Y."/>
            <person name="Togiya S."/>
            <person name="Komai F."/>
            <person name="Hara R."/>
            <person name="Takeuchi K."/>
            <person name="Arita M."/>
            <person name="Imose N."/>
            <person name="Musashino K."/>
            <person name="Yuuki H."/>
            <person name="Oshima A."/>
            <person name="Sasaki N."/>
            <person name="Aotsuka S."/>
            <person name="Yoshikawa Y."/>
            <person name="Matsunawa H."/>
            <person name="Ichihara T."/>
            <person name="Shiohata N."/>
            <person name="Sano S."/>
            <person name="Moriya S."/>
            <person name="Momiyama H."/>
            <person name="Satoh N."/>
            <person name="Takami S."/>
            <person name="Terashima Y."/>
            <person name="Suzuki O."/>
            <person name="Nakagawa S."/>
            <person name="Senoh A."/>
            <person name="Mizoguchi H."/>
            <person name="Goto Y."/>
            <person name="Shimizu F."/>
            <person name="Wakebe H."/>
            <person name="Hishigaki H."/>
            <person name="Watanabe T."/>
            <person name="Sugiyama A."/>
            <person name="Takemoto M."/>
            <person name="Kawakami B."/>
            <person name="Yamazaki M."/>
            <person name="Watanabe K."/>
            <person name="Kumagai A."/>
            <person name="Itakura S."/>
            <person name="Fukuzumi Y."/>
            <person name="Fujimori Y."/>
            <person name="Komiyama M."/>
            <person name="Tashiro H."/>
            <person name="Tanigami A."/>
            <person name="Fujiwara T."/>
            <person name="Ono T."/>
            <person name="Yamada K."/>
            <person name="Fujii Y."/>
            <person name="Ozaki K."/>
            <person name="Hirao M."/>
            <person name="Ohmori Y."/>
            <person name="Kawabata A."/>
            <person name="Hikiji T."/>
            <person name="Kobatake N."/>
            <person name="Inagaki H."/>
            <person name="Ikema Y."/>
            <person name="Okamoto S."/>
            <person name="Okitani R."/>
            <person name="Kawakami T."/>
            <person name="Noguchi S."/>
            <person name="Itoh T."/>
            <person name="Shigeta K."/>
            <person name="Senba T."/>
            <person name="Matsumura K."/>
            <person name="Nakajima Y."/>
            <person name="Mizuno T."/>
            <person name="Morinaga M."/>
            <person name="Sasaki M."/>
            <person name="Togashi T."/>
            <person name="Oyama M."/>
            <person name="Hata H."/>
            <person name="Watanabe M."/>
            <person name="Komatsu T."/>
            <person name="Mizushima-Sugano J."/>
            <person name="Satoh T."/>
            <person name="Shirai Y."/>
            <person name="Takahashi Y."/>
            <person name="Nakagawa K."/>
            <person name="Okumura K."/>
            <person name="Nagase T."/>
            <person name="Nomura N."/>
            <person name="Kikuchi H."/>
            <person name="Masuho Y."/>
            <person name="Yamashita R."/>
            <person name="Nakai K."/>
            <person name="Yada T."/>
            <person name="Nakamura Y."/>
            <person name="Ohara O."/>
            <person name="Isogai T."/>
            <person name="Sugano S."/>
        </authorList>
    </citation>
    <scope>NUCLEOTIDE SEQUENCE [LARGE SCALE MRNA]</scope>
    <source>
        <tissue>Placenta</tissue>
    </source>
</reference>
<reference key="3">
    <citation type="journal article" date="2004" name="Genome Res.">
        <title>The status, quality, and expansion of the NIH full-length cDNA project: the Mammalian Gene Collection (MGC).</title>
        <authorList>
            <consortium name="The MGC Project Team"/>
        </authorList>
    </citation>
    <scope>NUCLEOTIDE SEQUENCE [LARGE SCALE MRNA]</scope>
    <scope>VARIANT ASP-137</scope>
    <source>
        <tissue>Kidney</tissue>
    </source>
</reference>
<reference key="4">
    <citation type="journal article" date="2006" name="Cell">
        <title>CRTAP is required for prolyl 3-hydroxylation and mutations cause recessive osteogenesis imperfecta.</title>
        <authorList>
            <person name="Morello R."/>
            <person name="Bertin T.K."/>
            <person name="Chen Y."/>
            <person name="Hicks J."/>
            <person name="Tonachini L."/>
            <person name="Monticone M."/>
            <person name="Castagnola P."/>
            <person name="Rauch F."/>
            <person name="Glorieux F.H."/>
            <person name="Vranka J."/>
            <person name="Baechinger H.P."/>
            <person name="Pace J.M."/>
            <person name="Schwarze U."/>
            <person name="Byers P.H."/>
            <person name="Weis M."/>
            <person name="Fernandes R.J."/>
            <person name="Eyre D.R."/>
            <person name="Yao Z."/>
            <person name="Boyce B.F."/>
            <person name="Lee B."/>
        </authorList>
    </citation>
    <scope>FUNCTION</scope>
    <scope>INVOLVEMENT IN OI7</scope>
</reference>
<reference key="5">
    <citation type="journal article" date="2011" name="BMC Syst. Biol.">
        <title>Initial characterization of the human central proteome.</title>
        <authorList>
            <person name="Burkard T.R."/>
            <person name="Planyavsky M."/>
            <person name="Kaupe I."/>
            <person name="Breitwieser F.P."/>
            <person name="Buerckstuemmer T."/>
            <person name="Bennett K.L."/>
            <person name="Superti-Furga G."/>
            <person name="Colinge J."/>
        </authorList>
    </citation>
    <scope>IDENTIFICATION BY MASS SPECTROMETRY [LARGE SCALE ANALYSIS]</scope>
</reference>
<reference key="6">
    <citation type="journal article" date="2012" name="Clin. Genet.">
        <title>Deficiency of CRTAP in non-lethal recessive osteogenesis imperfecta reduces collagen deposition into matrix.</title>
        <authorList>
            <person name="Valli M."/>
            <person name="Barnes A.M."/>
            <person name="Gallanti A."/>
            <person name="Cabral W.A."/>
            <person name="Viglio S."/>
            <person name="Weis M.A."/>
            <person name="Makareeva E."/>
            <person name="Eyre D."/>
            <person name="Leikin S."/>
            <person name="Antoniazzi F."/>
            <person name="Marini J.C."/>
            <person name="Mottes M."/>
        </authorList>
    </citation>
    <scope>INVOLVEMENT IN OI7</scope>
</reference>
<reference key="7">
    <citation type="journal article" date="2015" name="Proteomics">
        <title>N-terminome analysis of the human mitochondrial proteome.</title>
        <authorList>
            <person name="Vaca Jacome A.S."/>
            <person name="Rabilloud T."/>
            <person name="Schaeffer-Reiss C."/>
            <person name="Rompais M."/>
            <person name="Ayoub D."/>
            <person name="Lane L."/>
            <person name="Bairoch A."/>
            <person name="Van Dorsselaer A."/>
            <person name="Carapito C."/>
        </authorList>
    </citation>
    <scope>IDENTIFICATION BY MASS SPECTROMETRY [LARGE SCALE ANALYSIS]</scope>
</reference>
<reference key="8">
    <citation type="journal article" date="2008" name="Hum. Mutat.">
        <title>CRTAP and LEPRE1 mutations in recessive osteogenesis imperfecta.</title>
        <authorList>
            <person name="Baldridge D."/>
            <person name="Schwarze U."/>
            <person name="Morello R."/>
            <person name="Lennington J."/>
            <person name="Bertin T.K."/>
            <person name="Pace J.M."/>
            <person name="Pepin M.G."/>
            <person name="Weis M."/>
            <person name="Eyre D.R."/>
            <person name="Walsh J."/>
            <person name="Lambert D."/>
            <person name="Green A."/>
            <person name="Robinson H."/>
            <person name="Michelson M."/>
            <person name="Houge G."/>
            <person name="Lindman C."/>
            <person name="Martin J."/>
            <person name="Ward J."/>
            <person name="Lemyre E."/>
            <person name="Mitchell J.J."/>
            <person name="Krakow D."/>
            <person name="Rimoin D.L."/>
            <person name="Cohn D.H."/>
            <person name="Byers P.H."/>
            <person name="Lee B."/>
        </authorList>
    </citation>
    <scope>VARIANT OI7 PRO-67</scope>
</reference>
<reference key="9">
    <citation type="journal article" date="2009" name="Eur. J. Hum. Genet.">
        <title>CRTAP mutations in lethal and severe osteogenesis imperfecta: the importance of combining biochemical and molecular genetic analysis.</title>
        <authorList>
            <person name="Van Dijk F.S."/>
            <person name="Nesbitt I.M."/>
            <person name="Nikkels P.G.J."/>
            <person name="Dalton A."/>
            <person name="Bongers E.M.H.F."/>
            <person name="van de Kamp J.M."/>
            <person name="Hilhorst-Hofstee Y."/>
            <person name="Den Hollander N.S."/>
            <person name="Lachmeijer A.M.A."/>
            <person name="Marcelis C.L."/>
            <person name="Tan-Sindhunata G.M.B."/>
            <person name="van Rijn R.R."/>
            <person name="Meijers-Heijboer H."/>
            <person name="Cobben J.M."/>
            <person name="Pals G."/>
        </authorList>
    </citation>
    <scope>VARIANTS OI7 GLU-13 AND GLU-157</scope>
</reference>